<proteinExistence type="inferred from homology"/>
<organism>
    <name type="scientific">Prochlorococcus marinus (strain NATL2A)</name>
    <dbReference type="NCBI Taxonomy" id="59920"/>
    <lineage>
        <taxon>Bacteria</taxon>
        <taxon>Bacillati</taxon>
        <taxon>Cyanobacteriota</taxon>
        <taxon>Cyanophyceae</taxon>
        <taxon>Synechococcales</taxon>
        <taxon>Prochlorococcaceae</taxon>
        <taxon>Prochlorococcus</taxon>
    </lineage>
</organism>
<protein>
    <recommendedName>
        <fullName evidence="1">Hydroxyacylglutathione hydrolase</fullName>
        <ecNumber evidence="1">3.1.2.6</ecNumber>
    </recommendedName>
    <alternativeName>
        <fullName evidence="1">Glyoxalase II</fullName>
        <shortName evidence="1">Glx II</shortName>
    </alternativeName>
</protein>
<comment type="function">
    <text evidence="1">Thiolesterase that catalyzes the hydrolysis of S-D-lactoyl-glutathione to form glutathione and D-lactic acid.</text>
</comment>
<comment type="catalytic activity">
    <reaction evidence="1">
        <text>an S-(2-hydroxyacyl)glutathione + H2O = a 2-hydroxy carboxylate + glutathione + H(+)</text>
        <dbReference type="Rhea" id="RHEA:21864"/>
        <dbReference type="ChEBI" id="CHEBI:15377"/>
        <dbReference type="ChEBI" id="CHEBI:15378"/>
        <dbReference type="ChEBI" id="CHEBI:57925"/>
        <dbReference type="ChEBI" id="CHEBI:58896"/>
        <dbReference type="ChEBI" id="CHEBI:71261"/>
        <dbReference type="EC" id="3.1.2.6"/>
    </reaction>
</comment>
<comment type="cofactor">
    <cofactor evidence="1">
        <name>Zn(2+)</name>
        <dbReference type="ChEBI" id="CHEBI:29105"/>
    </cofactor>
    <text evidence="1">Binds 2 Zn(2+) ions per subunit.</text>
</comment>
<comment type="pathway">
    <text evidence="1">Secondary metabolite metabolism; methylglyoxal degradation; (R)-lactate from methylglyoxal: step 2/2.</text>
</comment>
<comment type="subunit">
    <text evidence="1">Monomer.</text>
</comment>
<comment type="similarity">
    <text evidence="1">Belongs to the metallo-beta-lactamase superfamily. Glyoxalase II family.</text>
</comment>
<comment type="sequence caution" evidence="2">
    <conflict type="erroneous initiation">
        <sequence resource="EMBL-CDS" id="AAZ59377"/>
    </conflict>
</comment>
<evidence type="ECO:0000255" key="1">
    <source>
        <dbReference type="HAMAP-Rule" id="MF_01374"/>
    </source>
</evidence>
<evidence type="ECO:0000305" key="2"/>
<sequence length="251" mass="28691">MLGKKSDFTIHPINVLQDNIVWVWVHNCNAVVVDPSISGPVEKWLLEKNLSLKAILQTHHHDDHIGGTQKLIKTWPEAKVVASKKEHKRIPFQTFSVDDNDIFNLMDAEIKVIEVHGHTDNHIAFYISKQNAKCNILFPGDTLFGGGCGRLLEGSPVQMFESLYKLNSLPENTEIYPAHEYTESNLKWALSLEPGNISIIERLKLIQKKLQKGMSSLPSTLSEERKTNLFLIAENVEKFTMLRKHKDRWKC</sequence>
<accession>Q46GM1</accession>
<name>GLO2_PROMT</name>
<gene>
    <name evidence="1" type="primary">gloB</name>
    <name type="ordered locus">PMN2A_1889</name>
</gene>
<feature type="chain" id="PRO_0000309682" description="Hydroxyacylglutathione hydrolase">
    <location>
        <begin position="1"/>
        <end position="251"/>
    </location>
</feature>
<feature type="binding site" evidence="1">
    <location>
        <position position="59"/>
    </location>
    <ligand>
        <name>Zn(2+)</name>
        <dbReference type="ChEBI" id="CHEBI:29105"/>
        <label>1</label>
    </ligand>
</feature>
<feature type="binding site" evidence="1">
    <location>
        <position position="61"/>
    </location>
    <ligand>
        <name>Zn(2+)</name>
        <dbReference type="ChEBI" id="CHEBI:29105"/>
        <label>1</label>
    </ligand>
</feature>
<feature type="binding site" evidence="1">
    <location>
        <position position="63"/>
    </location>
    <ligand>
        <name>Zn(2+)</name>
        <dbReference type="ChEBI" id="CHEBI:29105"/>
        <label>2</label>
    </ligand>
</feature>
<feature type="binding site" evidence="1">
    <location>
        <position position="64"/>
    </location>
    <ligand>
        <name>Zn(2+)</name>
        <dbReference type="ChEBI" id="CHEBI:29105"/>
        <label>2</label>
    </ligand>
</feature>
<feature type="binding site" evidence="1">
    <location>
        <position position="118"/>
    </location>
    <ligand>
        <name>Zn(2+)</name>
        <dbReference type="ChEBI" id="CHEBI:29105"/>
        <label>1</label>
    </ligand>
</feature>
<feature type="binding site" evidence="1">
    <location>
        <position position="141"/>
    </location>
    <ligand>
        <name>Zn(2+)</name>
        <dbReference type="ChEBI" id="CHEBI:29105"/>
        <label>1</label>
    </ligand>
</feature>
<feature type="binding site" evidence="1">
    <location>
        <position position="141"/>
    </location>
    <ligand>
        <name>Zn(2+)</name>
        <dbReference type="ChEBI" id="CHEBI:29105"/>
        <label>2</label>
    </ligand>
</feature>
<feature type="binding site" evidence="1">
    <location>
        <position position="179"/>
    </location>
    <ligand>
        <name>Zn(2+)</name>
        <dbReference type="ChEBI" id="CHEBI:29105"/>
        <label>2</label>
    </ligand>
</feature>
<reference key="1">
    <citation type="journal article" date="2007" name="PLoS Genet.">
        <title>Patterns and implications of gene gain and loss in the evolution of Prochlorococcus.</title>
        <authorList>
            <person name="Kettler G.C."/>
            <person name="Martiny A.C."/>
            <person name="Huang K."/>
            <person name="Zucker J."/>
            <person name="Coleman M.L."/>
            <person name="Rodrigue S."/>
            <person name="Chen F."/>
            <person name="Lapidus A."/>
            <person name="Ferriera S."/>
            <person name="Johnson J."/>
            <person name="Steglich C."/>
            <person name="Church G.M."/>
            <person name="Richardson P."/>
            <person name="Chisholm S.W."/>
        </authorList>
    </citation>
    <scope>NUCLEOTIDE SEQUENCE [LARGE SCALE GENOMIC DNA]</scope>
    <source>
        <strain>NATL2A</strain>
    </source>
</reference>
<keyword id="KW-0378">Hydrolase</keyword>
<keyword id="KW-0479">Metal-binding</keyword>
<keyword id="KW-1185">Reference proteome</keyword>
<keyword id="KW-0862">Zinc</keyword>
<dbReference type="EC" id="3.1.2.6" evidence="1"/>
<dbReference type="EMBL" id="CP000095">
    <property type="protein sequence ID" value="AAZ59377.1"/>
    <property type="status" value="ALT_INIT"/>
    <property type="molecule type" value="Genomic_DNA"/>
</dbReference>
<dbReference type="RefSeq" id="WP_041711155.1">
    <property type="nucleotide sequence ID" value="NC_007335.2"/>
</dbReference>
<dbReference type="SMR" id="Q46GM1"/>
<dbReference type="STRING" id="59920.PMN2A_1889"/>
<dbReference type="KEGG" id="pmn:PMN2A_1889"/>
<dbReference type="HOGENOM" id="CLU_030571_4_1_3"/>
<dbReference type="OrthoDB" id="9802897at2"/>
<dbReference type="PhylomeDB" id="Q46GM1"/>
<dbReference type="UniPathway" id="UPA00619">
    <property type="reaction ID" value="UER00676"/>
</dbReference>
<dbReference type="Proteomes" id="UP000002535">
    <property type="component" value="Chromosome"/>
</dbReference>
<dbReference type="GO" id="GO:0004416">
    <property type="term" value="F:hydroxyacylglutathione hydrolase activity"/>
    <property type="evidence" value="ECO:0007669"/>
    <property type="project" value="UniProtKB-UniRule"/>
</dbReference>
<dbReference type="GO" id="GO:0046872">
    <property type="term" value="F:metal ion binding"/>
    <property type="evidence" value="ECO:0007669"/>
    <property type="project" value="UniProtKB-KW"/>
</dbReference>
<dbReference type="GO" id="GO:0019243">
    <property type="term" value="P:methylglyoxal catabolic process to D-lactate via S-lactoyl-glutathione"/>
    <property type="evidence" value="ECO:0007669"/>
    <property type="project" value="InterPro"/>
</dbReference>
<dbReference type="CDD" id="cd07723">
    <property type="entry name" value="hydroxyacylglutathione_hydrolase_MBL-fold"/>
    <property type="match status" value="1"/>
</dbReference>
<dbReference type="Gene3D" id="3.60.15.10">
    <property type="entry name" value="Ribonuclease Z/Hydroxyacylglutathione hydrolase-like"/>
    <property type="match status" value="1"/>
</dbReference>
<dbReference type="HAMAP" id="MF_01374">
    <property type="entry name" value="Glyoxalase_2"/>
    <property type="match status" value="1"/>
</dbReference>
<dbReference type="InterPro" id="IPR035680">
    <property type="entry name" value="Clx_II_MBL"/>
</dbReference>
<dbReference type="InterPro" id="IPR050110">
    <property type="entry name" value="Glyoxalase_II_hydrolase"/>
</dbReference>
<dbReference type="InterPro" id="IPR032282">
    <property type="entry name" value="HAGH_C"/>
</dbReference>
<dbReference type="InterPro" id="IPR017782">
    <property type="entry name" value="Hydroxyacylglutathione_Hdrlase"/>
</dbReference>
<dbReference type="InterPro" id="IPR001279">
    <property type="entry name" value="Metallo-B-lactamas"/>
</dbReference>
<dbReference type="InterPro" id="IPR036866">
    <property type="entry name" value="RibonucZ/Hydroxyglut_hydro"/>
</dbReference>
<dbReference type="NCBIfam" id="TIGR03413">
    <property type="entry name" value="GSH_gloB"/>
    <property type="match status" value="1"/>
</dbReference>
<dbReference type="PANTHER" id="PTHR43705">
    <property type="entry name" value="HYDROXYACYLGLUTATHIONE HYDROLASE"/>
    <property type="match status" value="1"/>
</dbReference>
<dbReference type="PANTHER" id="PTHR43705:SF1">
    <property type="entry name" value="HYDROXYACYLGLUTATHIONE HYDROLASE GLOB"/>
    <property type="match status" value="1"/>
</dbReference>
<dbReference type="Pfam" id="PF16123">
    <property type="entry name" value="HAGH_C"/>
    <property type="match status" value="1"/>
</dbReference>
<dbReference type="Pfam" id="PF00753">
    <property type="entry name" value="Lactamase_B"/>
    <property type="match status" value="1"/>
</dbReference>
<dbReference type="PIRSF" id="PIRSF005457">
    <property type="entry name" value="Glx"/>
    <property type="match status" value="1"/>
</dbReference>
<dbReference type="SMART" id="SM00849">
    <property type="entry name" value="Lactamase_B"/>
    <property type="match status" value="1"/>
</dbReference>
<dbReference type="SUPFAM" id="SSF56281">
    <property type="entry name" value="Metallo-hydrolase/oxidoreductase"/>
    <property type="match status" value="1"/>
</dbReference>